<keyword id="KW-1003">Cell membrane</keyword>
<keyword id="KW-0210">Decarboxylase</keyword>
<keyword id="KW-0444">Lipid biosynthesis</keyword>
<keyword id="KW-0443">Lipid metabolism</keyword>
<keyword id="KW-0456">Lyase</keyword>
<keyword id="KW-0472">Membrane</keyword>
<keyword id="KW-0594">Phospholipid biosynthesis</keyword>
<keyword id="KW-1208">Phospholipid metabolism</keyword>
<keyword id="KW-0670">Pyruvate</keyword>
<keyword id="KW-0865">Zymogen</keyword>
<proteinExistence type="inferred from homology"/>
<organism>
    <name type="scientific">Salmonella enteritidis PT4 (strain P125109)</name>
    <dbReference type="NCBI Taxonomy" id="550537"/>
    <lineage>
        <taxon>Bacteria</taxon>
        <taxon>Pseudomonadati</taxon>
        <taxon>Pseudomonadota</taxon>
        <taxon>Gammaproteobacteria</taxon>
        <taxon>Enterobacterales</taxon>
        <taxon>Enterobacteriaceae</taxon>
        <taxon>Salmonella</taxon>
    </lineage>
</organism>
<accession>B5R023</accession>
<sequence>MLNSFKLSLQYILPKLWLTRLAGWGASKRAGWLTKLVIDLFVKYYKVDMTEAQKPDTASYRTFNDFFVRPLRDDVRPLNTDPNILVMPADGVISQLGRIEEDKILQAKGHNYSLEALLAGNYLMADKFRNGTFVTTYLSPRDYHRVHMPCNGILREMIYVPGDLFSVNHLTAQNVPNLFARNERVICLFDTEFGPMAQILVGATIVGSIETVWAGTITPPREGIIKRWTWPEGEHEGSVALLKGQEMGRFKLGSTVINLFAPGKVNLIASLASLSVTKIGQPLATSTETFVAPEVEPAPLPAEEIKAEHDASPLVDNKKDDT</sequence>
<feature type="chain" id="PRO_1000131394" description="Phosphatidylserine decarboxylase beta chain" evidence="1">
    <location>
        <begin position="1"/>
        <end position="253"/>
    </location>
</feature>
<feature type="chain" id="PRO_1000131395" description="Phosphatidylserine decarboxylase alpha chain" evidence="1">
    <location>
        <begin position="254"/>
        <end position="322"/>
    </location>
</feature>
<feature type="region of interest" description="Disordered" evidence="2">
    <location>
        <begin position="296"/>
        <end position="322"/>
    </location>
</feature>
<feature type="compositionally biased region" description="Basic and acidic residues" evidence="2">
    <location>
        <begin position="303"/>
        <end position="322"/>
    </location>
</feature>
<feature type="active site" description="Charge relay system; for autoendoproteolytic cleavage activity" evidence="1">
    <location>
        <position position="90"/>
    </location>
</feature>
<feature type="active site" description="Charge relay system; for autoendoproteolytic cleavage activity" evidence="1">
    <location>
        <position position="147"/>
    </location>
</feature>
<feature type="active site" description="Charge relay system; for autoendoproteolytic cleavage activity" evidence="1">
    <location>
        <position position="254"/>
    </location>
</feature>
<feature type="active site" description="Schiff-base intermediate with substrate; via pyruvic acid; for decarboxylase activity" evidence="1">
    <location>
        <position position="254"/>
    </location>
</feature>
<feature type="site" description="Cleavage (non-hydrolytic); by autocatalysis" evidence="1">
    <location>
        <begin position="253"/>
        <end position="254"/>
    </location>
</feature>
<feature type="modified residue" description="Pyruvic acid (Ser); by autocatalysis" evidence="1">
    <location>
        <position position="254"/>
    </location>
</feature>
<dbReference type="EC" id="4.1.1.65" evidence="1"/>
<dbReference type="EMBL" id="AM933172">
    <property type="protein sequence ID" value="CAR35678.1"/>
    <property type="molecule type" value="Genomic_DNA"/>
</dbReference>
<dbReference type="SMR" id="B5R023"/>
<dbReference type="KEGG" id="set:SEN4118"/>
<dbReference type="HOGENOM" id="CLU_029061_4_1_6"/>
<dbReference type="UniPathway" id="UPA00558">
    <property type="reaction ID" value="UER00616"/>
</dbReference>
<dbReference type="Proteomes" id="UP000000613">
    <property type="component" value="Chromosome"/>
</dbReference>
<dbReference type="GO" id="GO:0005886">
    <property type="term" value="C:plasma membrane"/>
    <property type="evidence" value="ECO:0007669"/>
    <property type="project" value="UniProtKB-SubCell"/>
</dbReference>
<dbReference type="GO" id="GO:0004609">
    <property type="term" value="F:phosphatidylserine decarboxylase activity"/>
    <property type="evidence" value="ECO:0007669"/>
    <property type="project" value="UniProtKB-UniRule"/>
</dbReference>
<dbReference type="GO" id="GO:0006646">
    <property type="term" value="P:phosphatidylethanolamine biosynthetic process"/>
    <property type="evidence" value="ECO:0007669"/>
    <property type="project" value="UniProtKB-UniRule"/>
</dbReference>
<dbReference type="HAMAP" id="MF_00662">
    <property type="entry name" value="PS_decarb_PSD_B_type1"/>
    <property type="match status" value="1"/>
</dbReference>
<dbReference type="InterPro" id="IPR003817">
    <property type="entry name" value="PS_Dcarbxylase"/>
</dbReference>
<dbReference type="InterPro" id="IPR033177">
    <property type="entry name" value="PSD-B"/>
</dbReference>
<dbReference type="InterPro" id="IPR033178">
    <property type="entry name" value="PSD_type1_pro"/>
</dbReference>
<dbReference type="NCBIfam" id="TIGR00163">
    <property type="entry name" value="PS_decarb"/>
    <property type="match status" value="1"/>
</dbReference>
<dbReference type="PANTHER" id="PTHR10067">
    <property type="entry name" value="PHOSPHATIDYLSERINE DECARBOXYLASE"/>
    <property type="match status" value="1"/>
</dbReference>
<dbReference type="PANTHER" id="PTHR10067:SF6">
    <property type="entry name" value="PHOSPHATIDYLSERINE DECARBOXYLASE PROENZYME, MITOCHONDRIAL"/>
    <property type="match status" value="1"/>
</dbReference>
<dbReference type="Pfam" id="PF02666">
    <property type="entry name" value="PS_Dcarbxylase"/>
    <property type="match status" value="1"/>
</dbReference>
<name>PSD_SALEP</name>
<reference key="1">
    <citation type="journal article" date="2008" name="Genome Res.">
        <title>Comparative genome analysis of Salmonella enteritidis PT4 and Salmonella gallinarum 287/91 provides insights into evolutionary and host adaptation pathways.</title>
        <authorList>
            <person name="Thomson N.R."/>
            <person name="Clayton D.J."/>
            <person name="Windhorst D."/>
            <person name="Vernikos G."/>
            <person name="Davidson S."/>
            <person name="Churcher C."/>
            <person name="Quail M.A."/>
            <person name="Stevens M."/>
            <person name="Jones M.A."/>
            <person name="Watson M."/>
            <person name="Barron A."/>
            <person name="Layton A."/>
            <person name="Pickard D."/>
            <person name="Kingsley R.A."/>
            <person name="Bignell A."/>
            <person name="Clark L."/>
            <person name="Harris B."/>
            <person name="Ormond D."/>
            <person name="Abdellah Z."/>
            <person name="Brooks K."/>
            <person name="Cherevach I."/>
            <person name="Chillingworth T."/>
            <person name="Woodward J."/>
            <person name="Norberczak H."/>
            <person name="Lord A."/>
            <person name="Arrowsmith C."/>
            <person name="Jagels K."/>
            <person name="Moule S."/>
            <person name="Mungall K."/>
            <person name="Saunders M."/>
            <person name="Whitehead S."/>
            <person name="Chabalgoity J.A."/>
            <person name="Maskell D."/>
            <person name="Humphreys T."/>
            <person name="Roberts M."/>
            <person name="Barrow P.A."/>
            <person name="Dougan G."/>
            <person name="Parkhill J."/>
        </authorList>
    </citation>
    <scope>NUCLEOTIDE SEQUENCE [LARGE SCALE GENOMIC DNA]</scope>
    <source>
        <strain>P125109</strain>
    </source>
</reference>
<comment type="function">
    <text evidence="1">Catalyzes the formation of phosphatidylethanolamine (PtdEtn) from phosphatidylserine (PtdSer).</text>
</comment>
<comment type="catalytic activity">
    <reaction evidence="1">
        <text>a 1,2-diacyl-sn-glycero-3-phospho-L-serine + H(+) = a 1,2-diacyl-sn-glycero-3-phosphoethanolamine + CO2</text>
        <dbReference type="Rhea" id="RHEA:20828"/>
        <dbReference type="ChEBI" id="CHEBI:15378"/>
        <dbReference type="ChEBI" id="CHEBI:16526"/>
        <dbReference type="ChEBI" id="CHEBI:57262"/>
        <dbReference type="ChEBI" id="CHEBI:64612"/>
        <dbReference type="EC" id="4.1.1.65"/>
    </reaction>
</comment>
<comment type="cofactor">
    <cofactor evidence="1">
        <name>pyruvate</name>
        <dbReference type="ChEBI" id="CHEBI:15361"/>
    </cofactor>
    <text evidence="1">Binds 1 pyruvoyl group covalently per subunit.</text>
</comment>
<comment type="pathway">
    <text evidence="1">Phospholipid metabolism; phosphatidylethanolamine biosynthesis; phosphatidylethanolamine from CDP-diacylglycerol: step 2/2.</text>
</comment>
<comment type="subunit">
    <text evidence="1">Heterodimer of a large membrane-associated beta subunit and a small pyruvoyl-containing alpha subunit.</text>
</comment>
<comment type="subcellular location">
    <subcellularLocation>
        <location evidence="1">Cell membrane</location>
        <topology evidence="1">Peripheral membrane protein</topology>
    </subcellularLocation>
</comment>
<comment type="PTM">
    <text evidence="1">Is synthesized initially as an inactive proenzyme. Formation of the active enzyme involves a self-maturation process in which the active site pyruvoyl group is generated from an internal serine residue via an autocatalytic post-translational modification. Two non-identical subunits are generated from the proenzyme in this reaction, and the pyruvate is formed at the N-terminus of the alpha chain, which is derived from the carboxyl end of the proenzyme. The autoendoproteolytic cleavage occurs by a canonical serine protease mechanism, in which the side chain hydroxyl group of the serine supplies its oxygen atom to form the C-terminus of the beta chain, while the remainder of the serine residue undergoes an oxidative deamination to produce ammonia and the pyruvoyl prosthetic group on the alpha chain. During this reaction, the Ser that is part of the protease active site of the proenzyme becomes the pyruvoyl prosthetic group, which constitutes an essential element of the active site of the mature decarboxylase.</text>
</comment>
<comment type="similarity">
    <text evidence="1">Belongs to the phosphatidylserine decarboxylase family. PSD-B subfamily. Prokaryotic type I sub-subfamily.</text>
</comment>
<gene>
    <name evidence="1" type="primary">psd</name>
    <name type="ordered locus">SEN4118</name>
</gene>
<evidence type="ECO:0000255" key="1">
    <source>
        <dbReference type="HAMAP-Rule" id="MF_00662"/>
    </source>
</evidence>
<evidence type="ECO:0000256" key="2">
    <source>
        <dbReference type="SAM" id="MobiDB-lite"/>
    </source>
</evidence>
<protein>
    <recommendedName>
        <fullName evidence="1">Phosphatidylserine decarboxylase proenzyme</fullName>
        <ecNumber evidence="1">4.1.1.65</ecNumber>
    </recommendedName>
    <component>
        <recommendedName>
            <fullName evidence="1">Phosphatidylserine decarboxylase alpha chain</fullName>
        </recommendedName>
    </component>
    <component>
        <recommendedName>
            <fullName evidence="1">Phosphatidylserine decarboxylase beta chain</fullName>
        </recommendedName>
    </component>
</protein>